<keyword id="KW-0004">4Fe-4S</keyword>
<keyword id="KW-0963">Cytoplasm</keyword>
<keyword id="KW-0408">Iron</keyword>
<keyword id="KW-0411">Iron-sulfur</keyword>
<keyword id="KW-0479">Metal-binding</keyword>
<keyword id="KW-0949">S-adenosyl-L-methionine</keyword>
<keyword id="KW-0808">Transferase</keyword>
<keyword id="KW-0819">tRNA processing</keyword>
<dbReference type="EC" id="2.8.4.3" evidence="1"/>
<dbReference type="EMBL" id="AJ965256">
    <property type="protein sequence ID" value="CAI83392.1"/>
    <property type="molecule type" value="Genomic_DNA"/>
</dbReference>
<dbReference type="RefSeq" id="WP_011309743.1">
    <property type="nucleotide sequence ID" value="NC_007356.1"/>
</dbReference>
<dbReference type="SMR" id="Q3ZYS0"/>
<dbReference type="KEGG" id="deh:cbdbA1340"/>
<dbReference type="HOGENOM" id="CLU_018697_2_0_0"/>
<dbReference type="Proteomes" id="UP000000433">
    <property type="component" value="Chromosome"/>
</dbReference>
<dbReference type="GO" id="GO:0005829">
    <property type="term" value="C:cytosol"/>
    <property type="evidence" value="ECO:0007669"/>
    <property type="project" value="TreeGrafter"/>
</dbReference>
<dbReference type="GO" id="GO:0051539">
    <property type="term" value="F:4 iron, 4 sulfur cluster binding"/>
    <property type="evidence" value="ECO:0007669"/>
    <property type="project" value="UniProtKB-UniRule"/>
</dbReference>
<dbReference type="GO" id="GO:0046872">
    <property type="term" value="F:metal ion binding"/>
    <property type="evidence" value="ECO:0007669"/>
    <property type="project" value="UniProtKB-KW"/>
</dbReference>
<dbReference type="GO" id="GO:0035597">
    <property type="term" value="F:N6-isopentenyladenosine methylthiotransferase activity"/>
    <property type="evidence" value="ECO:0007669"/>
    <property type="project" value="TreeGrafter"/>
</dbReference>
<dbReference type="CDD" id="cd01335">
    <property type="entry name" value="Radical_SAM"/>
    <property type="match status" value="1"/>
</dbReference>
<dbReference type="FunFam" id="3.40.50.12160:FF:000003">
    <property type="entry name" value="CDK5 regulatory subunit-associated protein 1"/>
    <property type="match status" value="1"/>
</dbReference>
<dbReference type="FunFam" id="3.80.30.20:FF:000001">
    <property type="entry name" value="tRNA-2-methylthio-N(6)-dimethylallyladenosine synthase 2"/>
    <property type="match status" value="1"/>
</dbReference>
<dbReference type="Gene3D" id="3.40.50.12160">
    <property type="entry name" value="Methylthiotransferase, N-terminal domain"/>
    <property type="match status" value="1"/>
</dbReference>
<dbReference type="Gene3D" id="3.80.30.20">
    <property type="entry name" value="tm_1862 like domain"/>
    <property type="match status" value="1"/>
</dbReference>
<dbReference type="HAMAP" id="MF_01864">
    <property type="entry name" value="tRNA_metthiotr_MiaB"/>
    <property type="match status" value="1"/>
</dbReference>
<dbReference type="InterPro" id="IPR006638">
    <property type="entry name" value="Elp3/MiaA/NifB-like_rSAM"/>
</dbReference>
<dbReference type="InterPro" id="IPR005839">
    <property type="entry name" value="Methylthiotransferase"/>
</dbReference>
<dbReference type="InterPro" id="IPR020612">
    <property type="entry name" value="Methylthiotransferase_CS"/>
</dbReference>
<dbReference type="InterPro" id="IPR013848">
    <property type="entry name" value="Methylthiotransferase_N"/>
</dbReference>
<dbReference type="InterPro" id="IPR038135">
    <property type="entry name" value="Methylthiotransferase_N_sf"/>
</dbReference>
<dbReference type="InterPro" id="IPR006463">
    <property type="entry name" value="MiaB_methiolase"/>
</dbReference>
<dbReference type="InterPro" id="IPR007197">
    <property type="entry name" value="rSAM"/>
</dbReference>
<dbReference type="InterPro" id="IPR023404">
    <property type="entry name" value="rSAM_horseshoe"/>
</dbReference>
<dbReference type="InterPro" id="IPR002792">
    <property type="entry name" value="TRAM_dom"/>
</dbReference>
<dbReference type="NCBIfam" id="TIGR00089">
    <property type="entry name" value="MiaB/RimO family radical SAM methylthiotransferase"/>
    <property type="match status" value="1"/>
</dbReference>
<dbReference type="NCBIfam" id="NF010916">
    <property type="entry name" value="PRK14336.1"/>
    <property type="match status" value="1"/>
</dbReference>
<dbReference type="PANTHER" id="PTHR43020">
    <property type="entry name" value="CDK5 REGULATORY SUBUNIT-ASSOCIATED PROTEIN 1"/>
    <property type="match status" value="1"/>
</dbReference>
<dbReference type="PANTHER" id="PTHR43020:SF2">
    <property type="entry name" value="MITOCHONDRIAL TRNA METHYLTHIOTRANSFERASE CDK5RAP1"/>
    <property type="match status" value="1"/>
</dbReference>
<dbReference type="Pfam" id="PF04055">
    <property type="entry name" value="Radical_SAM"/>
    <property type="match status" value="1"/>
</dbReference>
<dbReference type="Pfam" id="PF01938">
    <property type="entry name" value="TRAM"/>
    <property type="match status" value="1"/>
</dbReference>
<dbReference type="Pfam" id="PF00919">
    <property type="entry name" value="UPF0004"/>
    <property type="match status" value="1"/>
</dbReference>
<dbReference type="SFLD" id="SFLDG01082">
    <property type="entry name" value="B12-binding_domain_containing"/>
    <property type="match status" value="1"/>
</dbReference>
<dbReference type="SFLD" id="SFLDG01061">
    <property type="entry name" value="methylthiotransferase"/>
    <property type="match status" value="1"/>
</dbReference>
<dbReference type="SFLD" id="SFLDS00029">
    <property type="entry name" value="Radical_SAM"/>
    <property type="match status" value="1"/>
</dbReference>
<dbReference type="SMART" id="SM00729">
    <property type="entry name" value="Elp3"/>
    <property type="match status" value="1"/>
</dbReference>
<dbReference type="SUPFAM" id="SSF102114">
    <property type="entry name" value="Radical SAM enzymes"/>
    <property type="match status" value="1"/>
</dbReference>
<dbReference type="PROSITE" id="PS51449">
    <property type="entry name" value="MTTASE_N"/>
    <property type="match status" value="1"/>
</dbReference>
<dbReference type="PROSITE" id="PS01278">
    <property type="entry name" value="MTTASE_RADICAL"/>
    <property type="match status" value="1"/>
</dbReference>
<dbReference type="PROSITE" id="PS51918">
    <property type="entry name" value="RADICAL_SAM"/>
    <property type="match status" value="1"/>
</dbReference>
<dbReference type="PROSITE" id="PS50926">
    <property type="entry name" value="TRAM"/>
    <property type="match status" value="1"/>
</dbReference>
<sequence>MPGYYLWTIGCQMNQAESDRLGRLFELWGYSLADKAEDAELVLVNSCVVREHAENKVVNRLHLLRSLKNKNPKLKIALTGCLVGQDISLIKKKFPFVDYIFGPGSMPDWREIPEGFILPLRPPVSANVTIMQGCNNFCTYCVVPYRRGREKSRSIAEIGCEVAELVRRGSREVVLLGQNVDSYGHDLPEKPCLADLLSALHDITGLLRIRFLTSHPKDISQKLIDAMAHLPKVCRSLSLPVQSGDDTILASMRRGYTNQQYRELVERIKTAMPDISLQTDLIVGFPSENEEQFNQSYKLMADIGYDAIHVAAYSPRPQTVAARDMADDVPVIEKKRRLKLIEDLQKETVGKANAALMDTFAEVLVEGLQKNKWQGRTLGGKLVFLESDLPLEGCLVKVKIFKTSPWSLQAKLVNILES</sequence>
<gene>
    <name evidence="1" type="primary">miaB</name>
    <name type="ordered locus">cbdbA1340</name>
</gene>
<comment type="function">
    <text evidence="1">Catalyzes the methylthiolation of N6-(dimethylallyl)adenosine (i(6)A), leading to the formation of 2-methylthio-N6-(dimethylallyl)adenosine (ms(2)i(6)A) at position 37 in tRNAs that read codons beginning with uridine.</text>
</comment>
<comment type="catalytic activity">
    <reaction evidence="1">
        <text>N(6)-dimethylallyladenosine(37) in tRNA + (sulfur carrier)-SH + AH2 + 2 S-adenosyl-L-methionine = 2-methylsulfanyl-N(6)-dimethylallyladenosine(37) in tRNA + (sulfur carrier)-H + 5'-deoxyadenosine + L-methionine + A + S-adenosyl-L-homocysteine + 2 H(+)</text>
        <dbReference type="Rhea" id="RHEA:37067"/>
        <dbReference type="Rhea" id="RHEA-COMP:10375"/>
        <dbReference type="Rhea" id="RHEA-COMP:10376"/>
        <dbReference type="Rhea" id="RHEA-COMP:14737"/>
        <dbReference type="Rhea" id="RHEA-COMP:14739"/>
        <dbReference type="ChEBI" id="CHEBI:13193"/>
        <dbReference type="ChEBI" id="CHEBI:15378"/>
        <dbReference type="ChEBI" id="CHEBI:17319"/>
        <dbReference type="ChEBI" id="CHEBI:17499"/>
        <dbReference type="ChEBI" id="CHEBI:29917"/>
        <dbReference type="ChEBI" id="CHEBI:57844"/>
        <dbReference type="ChEBI" id="CHEBI:57856"/>
        <dbReference type="ChEBI" id="CHEBI:59789"/>
        <dbReference type="ChEBI" id="CHEBI:64428"/>
        <dbReference type="ChEBI" id="CHEBI:74415"/>
        <dbReference type="ChEBI" id="CHEBI:74417"/>
        <dbReference type="EC" id="2.8.4.3"/>
    </reaction>
</comment>
<comment type="cofactor">
    <cofactor evidence="1">
        <name>[4Fe-4S] cluster</name>
        <dbReference type="ChEBI" id="CHEBI:49883"/>
    </cofactor>
    <text evidence="1">Binds 2 [4Fe-4S] clusters. One cluster is coordinated with 3 cysteines and an exchangeable S-adenosyl-L-methionine.</text>
</comment>
<comment type="subunit">
    <text evidence="1">Monomer.</text>
</comment>
<comment type="subcellular location">
    <subcellularLocation>
        <location evidence="1">Cytoplasm</location>
    </subcellularLocation>
</comment>
<comment type="similarity">
    <text evidence="1">Belongs to the methylthiotransferase family. MiaB subfamily.</text>
</comment>
<name>MIAB_DEHMC</name>
<evidence type="ECO:0000255" key="1">
    <source>
        <dbReference type="HAMAP-Rule" id="MF_01864"/>
    </source>
</evidence>
<evidence type="ECO:0000255" key="2">
    <source>
        <dbReference type="PROSITE-ProRule" id="PRU01266"/>
    </source>
</evidence>
<accession>Q3ZYS0</accession>
<proteinExistence type="inferred from homology"/>
<feature type="chain" id="PRO_0000374257" description="tRNA-2-methylthio-N(6)-dimethylallyladenosine synthase">
    <location>
        <begin position="1"/>
        <end position="418"/>
    </location>
</feature>
<feature type="domain" description="MTTase N-terminal" evidence="1">
    <location>
        <begin position="2"/>
        <end position="118"/>
    </location>
</feature>
<feature type="domain" description="Radical SAM core" evidence="2">
    <location>
        <begin position="120"/>
        <end position="351"/>
    </location>
</feature>
<feature type="domain" description="TRAM" evidence="1">
    <location>
        <begin position="346"/>
        <end position="414"/>
    </location>
</feature>
<feature type="binding site" evidence="1">
    <location>
        <position position="11"/>
    </location>
    <ligand>
        <name>[4Fe-4S] cluster</name>
        <dbReference type="ChEBI" id="CHEBI:49883"/>
        <label>1</label>
    </ligand>
</feature>
<feature type="binding site" evidence="1">
    <location>
        <position position="47"/>
    </location>
    <ligand>
        <name>[4Fe-4S] cluster</name>
        <dbReference type="ChEBI" id="CHEBI:49883"/>
        <label>1</label>
    </ligand>
</feature>
<feature type="binding site" evidence="1">
    <location>
        <position position="81"/>
    </location>
    <ligand>
        <name>[4Fe-4S] cluster</name>
        <dbReference type="ChEBI" id="CHEBI:49883"/>
        <label>1</label>
    </ligand>
</feature>
<feature type="binding site" evidence="1">
    <location>
        <position position="134"/>
    </location>
    <ligand>
        <name>[4Fe-4S] cluster</name>
        <dbReference type="ChEBI" id="CHEBI:49883"/>
        <label>2</label>
        <note>4Fe-4S-S-AdoMet</note>
    </ligand>
</feature>
<feature type="binding site" evidence="1">
    <location>
        <position position="138"/>
    </location>
    <ligand>
        <name>[4Fe-4S] cluster</name>
        <dbReference type="ChEBI" id="CHEBI:49883"/>
        <label>2</label>
        <note>4Fe-4S-S-AdoMet</note>
    </ligand>
</feature>
<feature type="binding site" evidence="1">
    <location>
        <position position="141"/>
    </location>
    <ligand>
        <name>[4Fe-4S] cluster</name>
        <dbReference type="ChEBI" id="CHEBI:49883"/>
        <label>2</label>
        <note>4Fe-4S-S-AdoMet</note>
    </ligand>
</feature>
<protein>
    <recommendedName>
        <fullName evidence="1">tRNA-2-methylthio-N(6)-dimethylallyladenosine synthase</fullName>
        <ecNumber evidence="1">2.8.4.3</ecNumber>
    </recommendedName>
    <alternativeName>
        <fullName evidence="1">(Dimethylallyl)adenosine tRNA methylthiotransferase MiaB</fullName>
    </alternativeName>
    <alternativeName>
        <fullName evidence="1">tRNA-i(6)A37 methylthiotransferase</fullName>
    </alternativeName>
</protein>
<reference key="1">
    <citation type="journal article" date="2005" name="Nat. Biotechnol.">
        <title>Genome sequence of the chlorinated compound-respiring bacterium Dehalococcoides species strain CBDB1.</title>
        <authorList>
            <person name="Kube M."/>
            <person name="Beck A."/>
            <person name="Zinder S.H."/>
            <person name="Kuhl H."/>
            <person name="Reinhardt R."/>
            <person name="Adrian L."/>
        </authorList>
    </citation>
    <scope>NUCLEOTIDE SEQUENCE [LARGE SCALE GENOMIC DNA]</scope>
    <source>
        <strain>CBDB1</strain>
    </source>
</reference>
<organism>
    <name type="scientific">Dehalococcoides mccartyi (strain CBDB1)</name>
    <dbReference type="NCBI Taxonomy" id="255470"/>
    <lineage>
        <taxon>Bacteria</taxon>
        <taxon>Bacillati</taxon>
        <taxon>Chloroflexota</taxon>
        <taxon>Dehalococcoidia</taxon>
        <taxon>Dehalococcoidales</taxon>
        <taxon>Dehalococcoidaceae</taxon>
        <taxon>Dehalococcoides</taxon>
    </lineage>
</organism>